<proteinExistence type="inferred from homology"/>
<accession>Q2FZV2</accession>
<organism>
    <name type="scientific">Staphylococcus aureus (strain NCTC 8325 / PS 47)</name>
    <dbReference type="NCBI Taxonomy" id="93061"/>
    <lineage>
        <taxon>Bacteria</taxon>
        <taxon>Bacillati</taxon>
        <taxon>Bacillota</taxon>
        <taxon>Bacilli</taxon>
        <taxon>Bacillales</taxon>
        <taxon>Staphylococcaceae</taxon>
        <taxon>Staphylococcus</taxon>
    </lineage>
</organism>
<feature type="chain" id="PRO_0000372109" description="Na(+)/H(+) antiporter subunit B1">
    <location>
        <begin position="1"/>
        <end position="142"/>
    </location>
</feature>
<feature type="transmembrane region" description="Helical" evidence="2">
    <location>
        <begin position="12"/>
        <end position="32"/>
    </location>
</feature>
<feature type="transmembrane region" description="Helical" evidence="2">
    <location>
        <begin position="37"/>
        <end position="57"/>
    </location>
</feature>
<feature type="transmembrane region" description="Helical" evidence="2">
    <location>
        <begin position="72"/>
        <end position="92"/>
    </location>
</feature>
<feature type="transmembrane region" description="Helical" evidence="2">
    <location>
        <begin position="116"/>
        <end position="136"/>
    </location>
</feature>
<reference key="1">
    <citation type="book" date="2006" name="Gram positive pathogens, 2nd edition">
        <title>The Staphylococcus aureus NCTC 8325 genome.</title>
        <editorList>
            <person name="Fischetti V."/>
            <person name="Novick R."/>
            <person name="Ferretti J."/>
            <person name="Portnoy D."/>
            <person name="Rood J."/>
        </editorList>
        <authorList>
            <person name="Gillaspy A.F."/>
            <person name="Worrell V."/>
            <person name="Orvis J."/>
            <person name="Roe B.A."/>
            <person name="Dyer D.W."/>
            <person name="Iandolo J.J."/>
        </authorList>
    </citation>
    <scope>NUCLEOTIDE SEQUENCE [LARGE SCALE GENOMIC DNA]</scope>
    <source>
        <strain>NCTC 8325 / PS 47</strain>
    </source>
</reference>
<gene>
    <name type="primary">mnhB1</name>
    <name type="ordered locus">SAOUHSC_00888</name>
</gene>
<name>MNHB1_STAA8</name>
<sequence length="142" mass="15682">MNRQQNDLILQFAAVIIFFMVMVFGFSLFLAGHYTPGGGFVGGLLFASSLVIITIAFDIETMRKIFPLDFKILIGIGLVFCIATPIASWFLGKNFFTHVTFDIPLFILEPVHMTTAVFFDFGVLCAVVGTVMTIIISIGENE</sequence>
<evidence type="ECO:0000250" key="1"/>
<evidence type="ECO:0000255" key="2"/>
<evidence type="ECO:0000305" key="3"/>
<keyword id="KW-0050">Antiport</keyword>
<keyword id="KW-1003">Cell membrane</keyword>
<keyword id="KW-0375">Hydrogen ion transport</keyword>
<keyword id="KW-0406">Ion transport</keyword>
<keyword id="KW-0472">Membrane</keyword>
<keyword id="KW-1185">Reference proteome</keyword>
<keyword id="KW-0915">Sodium</keyword>
<keyword id="KW-0739">Sodium transport</keyword>
<keyword id="KW-0812">Transmembrane</keyword>
<keyword id="KW-1133">Transmembrane helix</keyword>
<keyword id="KW-0813">Transport</keyword>
<comment type="function">
    <text evidence="1">Mnh complex is a Na(+)/H(+) antiporter involved in Na(+) excretion.</text>
</comment>
<comment type="subunit">
    <text evidence="1">May form a heterooligomeric complex that consists of seven subunits: mnhA1, mnhB1, mnhC1, mnhD1, mnhE1, mnhF1 and mnhG1.</text>
</comment>
<comment type="subcellular location">
    <subcellularLocation>
        <location evidence="3">Cell membrane</location>
        <topology evidence="3">Multi-pass membrane protein</topology>
    </subcellularLocation>
</comment>
<comment type="similarity">
    <text evidence="3">Belongs to the CPA3 antiporters (TC 2.A.63) subunit B family.</text>
</comment>
<protein>
    <recommendedName>
        <fullName>Na(+)/H(+) antiporter subunit B1</fullName>
    </recommendedName>
    <alternativeName>
        <fullName>Mnh complex subunit B1</fullName>
    </alternativeName>
</protein>
<dbReference type="EMBL" id="CP000253">
    <property type="protein sequence ID" value="ABD30013.1"/>
    <property type="molecule type" value="Genomic_DNA"/>
</dbReference>
<dbReference type="RefSeq" id="WP_001081626.1">
    <property type="nucleotide sequence ID" value="NZ_LS483365.1"/>
</dbReference>
<dbReference type="RefSeq" id="YP_499441.1">
    <property type="nucleotide sequence ID" value="NC_007795.1"/>
</dbReference>
<dbReference type="SMR" id="Q2FZV2"/>
<dbReference type="STRING" id="93061.SAOUHSC_00888"/>
<dbReference type="PaxDb" id="1280-SAXN108_0946"/>
<dbReference type="GeneID" id="3921734"/>
<dbReference type="GeneID" id="66839149"/>
<dbReference type="KEGG" id="sao:SAOUHSC_00888"/>
<dbReference type="PATRIC" id="fig|93061.5.peg.808"/>
<dbReference type="eggNOG" id="COG2111">
    <property type="taxonomic scope" value="Bacteria"/>
</dbReference>
<dbReference type="HOGENOM" id="CLU_101659_1_1_9"/>
<dbReference type="OrthoDB" id="9798859at2"/>
<dbReference type="PRO" id="PR:Q2FZV2"/>
<dbReference type="Proteomes" id="UP000008816">
    <property type="component" value="Chromosome"/>
</dbReference>
<dbReference type="GO" id="GO:0005886">
    <property type="term" value="C:plasma membrane"/>
    <property type="evidence" value="ECO:0007669"/>
    <property type="project" value="UniProtKB-SubCell"/>
</dbReference>
<dbReference type="GO" id="GO:0015297">
    <property type="term" value="F:antiporter activity"/>
    <property type="evidence" value="ECO:0007669"/>
    <property type="project" value="UniProtKB-KW"/>
</dbReference>
<dbReference type="GO" id="GO:0008324">
    <property type="term" value="F:monoatomic cation transmembrane transporter activity"/>
    <property type="evidence" value="ECO:0007669"/>
    <property type="project" value="InterPro"/>
</dbReference>
<dbReference type="GO" id="GO:1902600">
    <property type="term" value="P:proton transmembrane transport"/>
    <property type="evidence" value="ECO:0007669"/>
    <property type="project" value="UniProtKB-KW"/>
</dbReference>
<dbReference type="GO" id="GO:0006814">
    <property type="term" value="P:sodium ion transport"/>
    <property type="evidence" value="ECO:0007669"/>
    <property type="project" value="UniProtKB-KW"/>
</dbReference>
<dbReference type="InterPro" id="IPR050622">
    <property type="entry name" value="CPA3_antiporter_subunitB"/>
</dbReference>
<dbReference type="InterPro" id="IPR005281">
    <property type="entry name" value="CPA3_sub_B"/>
</dbReference>
<dbReference type="InterPro" id="IPR007182">
    <property type="entry name" value="MnhB"/>
</dbReference>
<dbReference type="NCBIfam" id="TIGR00943">
    <property type="entry name" value="2a6301s02"/>
    <property type="match status" value="1"/>
</dbReference>
<dbReference type="NCBIfam" id="NF009223">
    <property type="entry name" value="PRK12573.1"/>
    <property type="match status" value="1"/>
</dbReference>
<dbReference type="PANTHER" id="PTHR33932">
    <property type="entry name" value="NA(+)/H(+) ANTIPORTER SUBUNIT B"/>
    <property type="match status" value="1"/>
</dbReference>
<dbReference type="PANTHER" id="PTHR33932:SF4">
    <property type="entry name" value="NA(+)_H(+) ANTIPORTER SUBUNIT B"/>
    <property type="match status" value="1"/>
</dbReference>
<dbReference type="Pfam" id="PF04039">
    <property type="entry name" value="MnhB"/>
    <property type="match status" value="1"/>
</dbReference>